<dbReference type="EMBL" id="X03020">
    <property type="protein sequence ID" value="CAA26821.1"/>
    <property type="molecule type" value="Genomic_DNA"/>
</dbReference>
<dbReference type="EMBL" id="X03019">
    <property type="protein sequence ID" value="CAA26820.1"/>
    <property type="molecule type" value="mRNA"/>
</dbReference>
<dbReference type="EMBL" id="X02333">
    <property type="protein sequence ID" value="CAA26193.1"/>
    <property type="molecule type" value="mRNA"/>
</dbReference>
<dbReference type="EMBL" id="X02333">
    <property type="protein sequence ID" value="CAA26192.1"/>
    <property type="status" value="ALT_INIT"/>
    <property type="molecule type" value="mRNA"/>
</dbReference>
<dbReference type="EMBL" id="X05906">
    <property type="protein sequence ID" value="CAA29336.1"/>
    <property type="molecule type" value="mRNA"/>
</dbReference>
<dbReference type="EMBL" id="M11848">
    <property type="protein sequence ID" value="AAA37483.1"/>
    <property type="molecule type" value="mRNA"/>
</dbReference>
<dbReference type="CCDS" id="CCDS24692.1"/>
<dbReference type="PIR" id="I48368">
    <property type="entry name" value="FQMSGM"/>
</dbReference>
<dbReference type="RefSeq" id="NP_034099.2">
    <property type="nucleotide sequence ID" value="NM_009969.4"/>
</dbReference>
<dbReference type="SMR" id="P01587"/>
<dbReference type="FunCoup" id="P01587">
    <property type="interactions" value="565"/>
</dbReference>
<dbReference type="STRING" id="10090.ENSMUSP00000019060"/>
<dbReference type="GlyCosmos" id="P01587">
    <property type="glycosylation" value="4 sites, No reported glycans"/>
</dbReference>
<dbReference type="GlyGen" id="P01587">
    <property type="glycosylation" value="5 sites"/>
</dbReference>
<dbReference type="PhosphoSitePlus" id="P01587"/>
<dbReference type="PaxDb" id="10090-ENSMUSP00000019060"/>
<dbReference type="Antibodypedia" id="14363">
    <property type="antibodies" value="2004 antibodies from 52 providers"/>
</dbReference>
<dbReference type="DNASU" id="12981"/>
<dbReference type="Ensembl" id="ENSMUST00000019060.6">
    <property type="protein sequence ID" value="ENSMUSP00000019060.6"/>
    <property type="gene ID" value="ENSMUSG00000018916.6"/>
</dbReference>
<dbReference type="GeneID" id="12981"/>
<dbReference type="KEGG" id="mmu:12981"/>
<dbReference type="UCSC" id="uc007ixm.1">
    <property type="organism name" value="mouse"/>
</dbReference>
<dbReference type="AGR" id="MGI:1339752"/>
<dbReference type="CTD" id="1437"/>
<dbReference type="MGI" id="MGI:1339752">
    <property type="gene designation" value="Csf2"/>
</dbReference>
<dbReference type="VEuPathDB" id="HostDB:ENSMUSG00000018916"/>
<dbReference type="eggNOG" id="ENOG502TDUI">
    <property type="taxonomic scope" value="Eukaryota"/>
</dbReference>
<dbReference type="GeneTree" id="ENSGT00390000013425"/>
<dbReference type="HOGENOM" id="CLU_152286_0_0_1"/>
<dbReference type="InParanoid" id="P01587"/>
<dbReference type="OMA" id="SCETQII"/>
<dbReference type="OrthoDB" id="9633166at2759"/>
<dbReference type="PhylomeDB" id="P01587"/>
<dbReference type="TreeFam" id="TF338611"/>
<dbReference type="Reactome" id="R-MMU-512988">
    <property type="pathway name" value="Interleukin-3, Interleukin-5 and GM-CSF signaling"/>
</dbReference>
<dbReference type="Reactome" id="R-MMU-5673001">
    <property type="pathway name" value="RAF/MAP kinase cascade"/>
</dbReference>
<dbReference type="Reactome" id="R-MMU-912526">
    <property type="pathway name" value="Interleukin receptor SHC signaling"/>
</dbReference>
<dbReference type="BioGRID-ORCS" id="12981">
    <property type="hits" value="2 hits in 81 CRISPR screens"/>
</dbReference>
<dbReference type="ChiTaRS" id="Csf2">
    <property type="organism name" value="mouse"/>
</dbReference>
<dbReference type="PRO" id="PR:P01587"/>
<dbReference type="Proteomes" id="UP000000589">
    <property type="component" value="Chromosome 11"/>
</dbReference>
<dbReference type="RNAct" id="P01587">
    <property type="molecule type" value="protein"/>
</dbReference>
<dbReference type="Bgee" id="ENSMUSG00000018916">
    <property type="expression patterns" value="Expressed in left lung lobe and 20 other cell types or tissues"/>
</dbReference>
<dbReference type="ExpressionAtlas" id="P01587">
    <property type="expression patterns" value="baseline and differential"/>
</dbReference>
<dbReference type="GO" id="GO:0005615">
    <property type="term" value="C:extracellular space"/>
    <property type="evidence" value="ECO:0000314"/>
    <property type="project" value="MGI"/>
</dbReference>
<dbReference type="GO" id="GO:0030526">
    <property type="term" value="C:granulocyte macrophage colony-stimulating factor receptor complex"/>
    <property type="evidence" value="ECO:0007669"/>
    <property type="project" value="Ensembl"/>
</dbReference>
<dbReference type="GO" id="GO:0043231">
    <property type="term" value="C:intracellular membrane-bounded organelle"/>
    <property type="evidence" value="ECO:0007669"/>
    <property type="project" value="Ensembl"/>
</dbReference>
<dbReference type="GO" id="GO:0005125">
    <property type="term" value="F:cytokine activity"/>
    <property type="evidence" value="ECO:0000314"/>
    <property type="project" value="MGI"/>
</dbReference>
<dbReference type="GO" id="GO:0005129">
    <property type="term" value="F:granulocyte macrophage colony-stimulating factor receptor binding"/>
    <property type="evidence" value="ECO:0007669"/>
    <property type="project" value="InterPro"/>
</dbReference>
<dbReference type="GO" id="GO:0008083">
    <property type="term" value="F:growth factor activity"/>
    <property type="evidence" value="ECO:0007669"/>
    <property type="project" value="UniProtKB-KW"/>
</dbReference>
<dbReference type="GO" id="GO:0008283">
    <property type="term" value="P:cell population proliferation"/>
    <property type="evidence" value="ECO:0000314"/>
    <property type="project" value="MGI"/>
</dbReference>
<dbReference type="GO" id="GO:0007259">
    <property type="term" value="P:cell surface receptor signaling pathway via JAK-STAT"/>
    <property type="evidence" value="ECO:0007669"/>
    <property type="project" value="Ensembl"/>
</dbReference>
<dbReference type="GO" id="GO:0097011">
    <property type="term" value="P:cellular response to granulocyte macrophage colony-stimulating factor stimulus"/>
    <property type="evidence" value="ECO:0007669"/>
    <property type="project" value="Ensembl"/>
</dbReference>
<dbReference type="GO" id="GO:0001892">
    <property type="term" value="P:embryonic placenta development"/>
    <property type="evidence" value="ECO:0000315"/>
    <property type="project" value="MGI"/>
</dbReference>
<dbReference type="GO" id="GO:0038157">
    <property type="term" value="P:granulocyte-macrophage colony-stimulating factor signaling pathway"/>
    <property type="evidence" value="ECO:0007669"/>
    <property type="project" value="Ensembl"/>
</dbReference>
<dbReference type="GO" id="GO:0006955">
    <property type="term" value="P:immune response"/>
    <property type="evidence" value="ECO:0007669"/>
    <property type="project" value="InterPro"/>
</dbReference>
<dbReference type="GO" id="GO:0030225">
    <property type="term" value="P:macrophage differentiation"/>
    <property type="evidence" value="ECO:0007669"/>
    <property type="project" value="Ensembl"/>
</dbReference>
<dbReference type="GO" id="GO:0030224">
    <property type="term" value="P:monocyte differentiation"/>
    <property type="evidence" value="ECO:0000314"/>
    <property type="project" value="MGI"/>
</dbReference>
<dbReference type="GO" id="GO:0043011">
    <property type="term" value="P:myeloid dendritic cell differentiation"/>
    <property type="evidence" value="ECO:0000314"/>
    <property type="project" value="MGI"/>
</dbReference>
<dbReference type="GO" id="GO:0045892">
    <property type="term" value="P:negative regulation of DNA-templated transcription"/>
    <property type="evidence" value="ECO:0007669"/>
    <property type="project" value="Ensembl"/>
</dbReference>
<dbReference type="GO" id="GO:2001240">
    <property type="term" value="P:negative regulation of extrinsic apoptotic signaling pathway in absence of ligand"/>
    <property type="evidence" value="ECO:0007669"/>
    <property type="project" value="Ensembl"/>
</dbReference>
<dbReference type="GO" id="GO:0030223">
    <property type="term" value="P:neutrophil differentiation"/>
    <property type="evidence" value="ECO:0000314"/>
    <property type="project" value="MGI"/>
</dbReference>
<dbReference type="GO" id="GO:0008284">
    <property type="term" value="P:positive regulation of cell population proliferation"/>
    <property type="evidence" value="ECO:0000314"/>
    <property type="project" value="MGI"/>
</dbReference>
<dbReference type="GO" id="GO:0032747">
    <property type="term" value="P:positive regulation of interleukin-23 production"/>
    <property type="evidence" value="ECO:0007669"/>
    <property type="project" value="Ensembl"/>
</dbReference>
<dbReference type="GO" id="GO:0070665">
    <property type="term" value="P:positive regulation of leukocyte proliferation"/>
    <property type="evidence" value="ECO:0007669"/>
    <property type="project" value="Ensembl"/>
</dbReference>
<dbReference type="GO" id="GO:0010744">
    <property type="term" value="P:positive regulation of macrophage derived foam cell differentiation"/>
    <property type="evidence" value="ECO:0007669"/>
    <property type="project" value="Ensembl"/>
</dbReference>
<dbReference type="GO" id="GO:0071803">
    <property type="term" value="P:positive regulation of podosome assembly"/>
    <property type="evidence" value="ECO:0007669"/>
    <property type="project" value="Ensembl"/>
</dbReference>
<dbReference type="GO" id="GO:0042127">
    <property type="term" value="P:regulation of cell population proliferation"/>
    <property type="evidence" value="ECO:0000316"/>
    <property type="project" value="MGI"/>
</dbReference>
<dbReference type="GO" id="GO:0010468">
    <property type="term" value="P:regulation of gene expression"/>
    <property type="evidence" value="ECO:0000314"/>
    <property type="project" value="MGI"/>
</dbReference>
<dbReference type="CDD" id="cd00040">
    <property type="entry name" value="CSF2"/>
    <property type="match status" value="1"/>
</dbReference>
<dbReference type="Gene3D" id="1.20.1250.10">
    <property type="match status" value="1"/>
</dbReference>
<dbReference type="InterPro" id="IPR009079">
    <property type="entry name" value="4_helix_cytokine-like_core"/>
</dbReference>
<dbReference type="InterPro" id="IPR000773">
    <property type="entry name" value="GM_colony-stim-fac"/>
</dbReference>
<dbReference type="PANTHER" id="PTHR10059:SF0">
    <property type="entry name" value="GRANULOCYTE-MACROPHAGE COLONY-STIMULATING FACTOR"/>
    <property type="match status" value="1"/>
</dbReference>
<dbReference type="PANTHER" id="PTHR10059">
    <property type="entry name" value="GRANULOCYTE-MACROPHAGE COLONY-STIMULATING FACTOR GM-CSF"/>
    <property type="match status" value="1"/>
</dbReference>
<dbReference type="Pfam" id="PF01109">
    <property type="entry name" value="GM_CSF"/>
    <property type="match status" value="1"/>
</dbReference>
<dbReference type="PRINTS" id="PR00693">
    <property type="entry name" value="GMCSFACTOR"/>
</dbReference>
<dbReference type="SMART" id="SM00040">
    <property type="entry name" value="CSF2"/>
    <property type="match status" value="1"/>
</dbReference>
<dbReference type="SUPFAM" id="SSF47266">
    <property type="entry name" value="4-helical cytokines"/>
    <property type="match status" value="1"/>
</dbReference>
<dbReference type="PROSITE" id="PS00702">
    <property type="entry name" value="GM_CSF"/>
    <property type="match status" value="1"/>
</dbReference>
<gene>
    <name type="primary">Csf2</name>
    <name type="synonym">Csfgm</name>
</gene>
<accession>P01587</accession>
<reference key="1">
    <citation type="journal article" date="1985" name="EMBO J.">
        <title>Structure of the chromosomal gene for granulocyte-macrophage colony stimulating factor: comparison of the mouse and human genes.</title>
        <authorList>
            <person name="Miyatake S."/>
            <person name="Otsuka T."/>
            <person name="Yokota T."/>
            <person name="Lee F."/>
            <person name="Arai K."/>
        </authorList>
    </citation>
    <scope>NUCLEOTIDE SEQUENCE [GENOMIC DNA]</scope>
</reference>
<reference key="2">
    <citation type="journal article" date="1985" name="EMBO J.">
        <title>The structure and expression of the murine gene encoding granulocyte-macrophage colony stimulating factor: evidence for utilisation of alternative promoters.</title>
        <authorList>
            <person name="Stanley E.R."/>
            <person name="Metcalf D."/>
            <person name="Sobieszczuk P."/>
            <person name="Gough N.M."/>
            <person name="Dunn A.R."/>
        </authorList>
    </citation>
    <scope>NUCLEOTIDE SEQUENCE [GENOMIC DNA]</scope>
</reference>
<reference key="3">
    <citation type="journal article" date="1985" name="EMBO J.">
        <title>Recombinant murine GM-CSF from E. coli has biological activity and is neutralized by a specific antiserum.</title>
        <authorList>
            <person name="Delamarter J.F."/>
            <person name="Mermod J.-J."/>
            <person name="Liang C.M."/>
            <person name="Eliason J.F."/>
            <person name="Thatcher D.R."/>
        </authorList>
    </citation>
    <scope>NUCLEOTIDE SEQUENCE [MRNA]</scope>
</reference>
<reference key="4">
    <citation type="journal article" date="1985" name="EMBO J.">
        <title>Structure and expression of the mRNA for murine granulocyte-macrophage colony stimulating factor.</title>
        <authorList>
            <person name="Gough N.M."/>
            <person name="Metcalf D."/>
            <person name="Gough J."/>
            <person name="Grail D."/>
            <person name="Dunn A.R."/>
        </authorList>
    </citation>
    <scope>NUCLEOTIDE SEQUENCE [MRNA]</scope>
    <source>
        <strain>BALB/cJ</strain>
    </source>
</reference>
<reference key="5">
    <citation type="journal article" date="1984" name="Nature">
        <title>Molecular cloning of cDNA encoding a murine haematopoietic growth regulator, granulocyte-macrophage colony stimulating factor.</title>
        <authorList>
            <person name="Gough N.M."/>
            <person name="Gough J."/>
            <person name="Metcalf D."/>
            <person name="Kelso A."/>
            <person name="Grail D."/>
            <person name="Nicola N.A."/>
            <person name="Burgess A.W."/>
            <person name="Dunn A.R."/>
        </authorList>
    </citation>
    <scope>NUCLEOTIDE SEQUENCE [MRNA] OF 24-141</scope>
    <source>
        <tissue>Lung</tissue>
    </source>
</reference>
<reference key="6">
    <citation type="journal article" date="1985" name="Proc. Natl. Acad. Sci. U.S.A.">
        <title>Cloning, sequence, and expression of a human granulocyte/macrophage colony-stimulating factor.</title>
        <authorList>
            <person name="Cantrell M.A."/>
            <person name="Anderson D."/>
            <person name="Cerretti D.P."/>
            <person name="Price V."/>
            <person name="McKereghan K."/>
            <person name="Tushinski R.J."/>
            <person name="Mochizuki D.Y."/>
            <person name="Larsen A."/>
            <person name="Grabstein S."/>
            <person name="Gillis S."/>
            <person name="Cosman D."/>
        </authorList>
    </citation>
    <scope>NUCLEOTIDE SEQUENCE [MRNA] OF 18-141</scope>
</reference>
<reference key="7">
    <citation type="journal article" date="1985" name="Proc. Natl. Acad. Sci. U.S.A.">
        <title>Purification and partial amino acid sequence of asialo murine granulocyte-macrophage colony stimulating factor.</title>
        <authorList>
            <person name="Sparrow L.G."/>
            <person name="Metcalf D."/>
            <person name="Hunkapiller M.W."/>
            <person name="Hood L.E."/>
            <person name="Burgess A.W."/>
        </authorList>
    </citation>
    <scope>PROTEIN SEQUENCE OF 24-57</scope>
</reference>
<reference key="8">
    <citation type="journal article" date="1987" name="Biochem. J.">
        <title>Characterization of human and mouse granulocyte-macrophage-colony-stimulating factors derived from Escherichia coli.</title>
        <authorList>
            <person name="Schrimser J.L."/>
            <person name="Rose K."/>
            <person name="Simona M.G."/>
            <person name="Wingfield P."/>
        </authorList>
    </citation>
    <scope>DISULFIDE BONDS</scope>
</reference>
<reference key="9">
    <citation type="journal article" date="1991" name="J. Biol. Chem.">
        <title>Single proline substitutions in predicted alpha-helices of murine granulocyte-macrophage colony-stimulating factor result in a loss in bioactivity and altered glycosylation.</title>
        <authorList>
            <person name="Altmann S.W."/>
            <person name="Johnson G.D."/>
            <person name="Prystowsky M.B."/>
        </authorList>
    </citation>
    <scope>MUTAGENESIS</scope>
</reference>
<organism>
    <name type="scientific">Mus musculus</name>
    <name type="common">Mouse</name>
    <dbReference type="NCBI Taxonomy" id="10090"/>
    <lineage>
        <taxon>Eukaryota</taxon>
        <taxon>Metazoa</taxon>
        <taxon>Chordata</taxon>
        <taxon>Craniata</taxon>
        <taxon>Vertebrata</taxon>
        <taxon>Euteleostomi</taxon>
        <taxon>Mammalia</taxon>
        <taxon>Eutheria</taxon>
        <taxon>Euarchontoglires</taxon>
        <taxon>Glires</taxon>
        <taxon>Rodentia</taxon>
        <taxon>Myomorpha</taxon>
        <taxon>Muroidea</taxon>
        <taxon>Muridae</taxon>
        <taxon>Murinae</taxon>
        <taxon>Mus</taxon>
        <taxon>Mus</taxon>
    </lineage>
</organism>
<keyword id="KW-0202">Cytokine</keyword>
<keyword id="KW-0903">Direct protein sequencing</keyword>
<keyword id="KW-1015">Disulfide bond</keyword>
<keyword id="KW-0325">Glycoprotein</keyword>
<keyword id="KW-0339">Growth factor</keyword>
<keyword id="KW-1185">Reference proteome</keyword>
<keyword id="KW-0964">Secreted</keyword>
<keyword id="KW-0732">Signal</keyword>
<name>CSF2_MOUSE</name>
<comment type="function">
    <text>Cytokine that stimulates the growth and differentiation of hematopoietic precursor cells from various lineages, including granulocytes, macrophages, eosinophils and erythrocytes.</text>
</comment>
<comment type="subunit">
    <text evidence="1">Monomer. The signaling GM-CSF receptor complex is a dodecamer of two head-to-head hexamers of two alpha, two beta, and two ligand subunits (By similarity).</text>
</comment>
<comment type="subcellular location">
    <subcellularLocation>
        <location>Secreted</location>
    </subcellularLocation>
</comment>
<comment type="similarity">
    <text evidence="4">Belongs to the GM-CSF family.</text>
</comment>
<comment type="sequence caution" evidence="4">
    <conflict type="erroneous initiation">
        <sequence resource="EMBL-CDS" id="CAA26192"/>
    </conflict>
</comment>
<proteinExistence type="evidence at protein level"/>
<evidence type="ECO:0000250" key="1"/>
<evidence type="ECO:0000269" key="2">
    <source>
    </source>
</evidence>
<evidence type="ECO:0000269" key="3">
    <source>
    </source>
</evidence>
<evidence type="ECO:0000305" key="4"/>
<feature type="signal peptide">
    <location>
        <begin position="1"/>
        <end position="17"/>
    </location>
</feature>
<feature type="chain" id="PRO_0000005866" description="Granulocyte-macrophage colony-stimulating factor">
    <location>
        <begin position="18"/>
        <end position="141"/>
    </location>
</feature>
<feature type="glycosylation site" description="O-linked (GalNAc...) serine" evidence="1">
    <location>
        <position position="22"/>
    </location>
</feature>
<feature type="glycosylation site" description="O-linked (GalNAc...) threonine" evidence="1">
    <location>
        <position position="27"/>
    </location>
</feature>
<feature type="glycosylation site" description="N-linked (GlcNAc...) asparagine">
    <location>
        <position position="83"/>
    </location>
</feature>
<feature type="glycosylation site" description="N-linked (GlcNAc...) asparagine">
    <location>
        <position position="92"/>
    </location>
</feature>
<feature type="disulfide bond" evidence="3">
    <location>
        <begin position="68"/>
        <end position="110"/>
    </location>
</feature>
<feature type="disulfide bond" evidence="3">
    <location>
        <begin position="102"/>
        <end position="135"/>
    </location>
</feature>
<feature type="mutagenesis site" description="Reduction in bioactivity." evidence="2">
    <original>E</original>
    <variation>P</variation>
    <location>
        <position position="38"/>
    </location>
</feature>
<feature type="mutagenesis site" description="25-fold reduction in bioactivity." evidence="2">
    <original>L</original>
    <variation>P</variation>
    <location>
        <position position="73"/>
    </location>
</feature>
<feature type="mutagenesis site" description="50-fold reduction in bioactivity." evidence="2">
    <original>E</original>
    <variation>P</variation>
    <location>
        <position position="77"/>
    </location>
</feature>
<feature type="mutagenesis site" description="450-fold reduction in bioactivity." evidence="2">
    <original>L</original>
    <variation>P</variation>
    <location>
        <position position="80"/>
    </location>
</feature>
<feature type="mutagenesis site" description="5500-fold reduction in bioactivity." evidence="2">
    <original>L</original>
    <variation>P</variation>
    <location>
        <position position="124"/>
    </location>
</feature>
<feature type="sequence conflict" description="In Ref. 5; CAA29336 and 7; AA sequence." evidence="4" ref="5 7">
    <original>T</original>
    <variation>I</variation>
    <location>
        <position position="25"/>
    </location>
</feature>
<feature type="sequence conflict" description="In Ref. 6; AAA37483." evidence="4" ref="6">
    <original>V</original>
    <variation>A</variation>
    <location>
        <position position="114"/>
    </location>
</feature>
<feature type="sequence conflict" description="In Ref. 5; CAA29336." evidence="4" ref="5">
    <original>G</original>
    <variation>S</variation>
    <location>
        <position position="139"/>
    </location>
</feature>
<feature type="sequence conflict" description="In Ref. 2; CAA26820, 3; no nucleotide entry, 4; CAA26192/CAA26193 and 6; AAA37483." evidence="4" ref="2 3 4 6">
    <original>G</original>
    <variation>V</variation>
    <location>
        <position position="139"/>
    </location>
</feature>
<sequence>MWLQNLLFLGIVVYSLSAPTRSPITVTRPWKHVEAIKEALNLLDDMPVTLNEEVEVVSNEFSFKKLTCVQTRLKIFEQGLRGNFTKLKGALNMTASYYQTYCPPTPETDCETQVTTYADFIDSLKTFLTDIPFECKKPGQK</sequence>
<protein>
    <recommendedName>
        <fullName>Granulocyte-macrophage colony-stimulating factor</fullName>
        <shortName>GM-CSF</shortName>
    </recommendedName>
    <alternativeName>
        <fullName>Colony-stimulating factor</fullName>
        <shortName>CSF</shortName>
    </alternativeName>
</protein>